<organismHost>
    <name type="scientific">Homo sapiens</name>
    <name type="common">Human</name>
    <dbReference type="NCBI Taxonomy" id="9606"/>
</organismHost>
<name>PG085_VACCC</name>
<proteinExistence type="inferred from homology"/>
<comment type="function">
    <text evidence="1">Probably involved in maturation of some viral proteins by processing them preferentially at Ala-Gly-|-Ser/Thr/Lys motifs. Does not seem to be responsible for the cleavage of major core proteins.</text>
</comment>
<comment type="cofactor">
    <cofactor evidence="1">
        <name>Zn(2+)</name>
        <dbReference type="ChEBI" id="CHEBI:29105"/>
    </cofactor>
    <text evidence="1">Binds 1 zinc ion.</text>
</comment>
<comment type="subcellular location">
    <subcellularLocation>
        <location evidence="1">Virion</location>
    </subcellularLocation>
    <text evidence="1">Localizes to the virion core.</text>
</comment>
<comment type="PTM">
    <text evidence="1">Undergoes proteolytic processing during the course of infection. May be cleaved into 46 kDa and 22 kDa products (Potential).</text>
</comment>
<comment type="similarity">
    <text evidence="3">Belongs to the peptidase M44 family.</text>
</comment>
<evidence type="ECO:0000250" key="1">
    <source>
        <dbReference type="UniProtKB" id="P16713"/>
    </source>
</evidence>
<evidence type="ECO:0000255" key="2"/>
<evidence type="ECO:0000305" key="3"/>
<accession>P21022</accession>
<organism>
    <name type="scientific">Vaccinia virus (strain Copenhagen)</name>
    <name type="common">VACV</name>
    <dbReference type="NCBI Taxonomy" id="10249"/>
    <lineage>
        <taxon>Viruses</taxon>
        <taxon>Varidnaviria</taxon>
        <taxon>Bamfordvirae</taxon>
        <taxon>Nucleocytoviricota</taxon>
        <taxon>Pokkesviricetes</taxon>
        <taxon>Chitovirales</taxon>
        <taxon>Poxviridae</taxon>
        <taxon>Chordopoxvirinae</taxon>
        <taxon>Orthopoxvirus</taxon>
        <taxon>Vaccinia virus</taxon>
    </lineage>
</organism>
<dbReference type="EC" id="3.4.24.-" evidence="1"/>
<dbReference type="EMBL" id="M35027">
    <property type="protein sequence ID" value="AAA48065.1"/>
    <property type="molecule type" value="Genomic_DNA"/>
</dbReference>
<dbReference type="PIR" id="F42511">
    <property type="entry name" value="F42511"/>
</dbReference>
<dbReference type="SMR" id="P21022"/>
<dbReference type="MEROPS" id="M44.001"/>
<dbReference type="Proteomes" id="UP000008269">
    <property type="component" value="Segment"/>
</dbReference>
<dbReference type="GO" id="GO:0044423">
    <property type="term" value="C:virion component"/>
    <property type="evidence" value="ECO:0007669"/>
    <property type="project" value="UniProtKB-KW"/>
</dbReference>
<dbReference type="GO" id="GO:0004222">
    <property type="term" value="F:metalloendopeptidase activity"/>
    <property type="evidence" value="ECO:0007669"/>
    <property type="project" value="InterPro"/>
</dbReference>
<dbReference type="GO" id="GO:0008270">
    <property type="term" value="F:zinc ion binding"/>
    <property type="evidence" value="ECO:0007669"/>
    <property type="project" value="InterPro"/>
</dbReference>
<dbReference type="GO" id="GO:0006508">
    <property type="term" value="P:proteolysis"/>
    <property type="evidence" value="ECO:0007669"/>
    <property type="project" value="UniProtKB-KW"/>
</dbReference>
<dbReference type="GO" id="GO:0019058">
    <property type="term" value="P:viral life cycle"/>
    <property type="evidence" value="ECO:0007669"/>
    <property type="project" value="InterPro"/>
</dbReference>
<dbReference type="InterPro" id="IPR011249">
    <property type="entry name" value="Metalloenz_LuxS/M16"/>
</dbReference>
<dbReference type="InterPro" id="IPR005072">
    <property type="entry name" value="Peptidase_M44"/>
</dbReference>
<dbReference type="Pfam" id="PF03410">
    <property type="entry name" value="Peptidase_M44"/>
    <property type="match status" value="1"/>
</dbReference>
<dbReference type="PIRSF" id="PIRSF015679">
    <property type="entry name" value="Peptidase_M44"/>
    <property type="match status" value="1"/>
</dbReference>
<dbReference type="SUPFAM" id="SSF63411">
    <property type="entry name" value="LuxS/MPP-like metallohydrolase"/>
    <property type="match status" value="1"/>
</dbReference>
<keyword id="KW-0378">Hydrolase</keyword>
<keyword id="KW-0426">Late protein</keyword>
<keyword id="KW-0479">Metal-binding</keyword>
<keyword id="KW-0482">Metalloprotease</keyword>
<keyword id="KW-0645">Protease</keyword>
<keyword id="KW-1185">Reference proteome</keyword>
<keyword id="KW-0946">Virion</keyword>
<keyword id="KW-0862">Zinc</keyword>
<feature type="chain" id="PRO_0000218444" description="Metalloendopeptidase OPG085">
    <location>
        <begin position="1"/>
        <end position="591"/>
    </location>
</feature>
<feature type="active site" evidence="2">
    <location>
        <position position="44"/>
    </location>
</feature>
<feature type="binding site" evidence="2">
    <location>
        <position position="41"/>
    </location>
    <ligand>
        <name>Zn(2+)</name>
        <dbReference type="ChEBI" id="CHEBI:29105"/>
        <note>catalytic</note>
    </ligand>
</feature>
<feature type="binding site" evidence="2">
    <location>
        <position position="45"/>
    </location>
    <ligand>
        <name>Zn(2+)</name>
        <dbReference type="ChEBI" id="CHEBI:29105"/>
        <note>catalytic</note>
    </ligand>
</feature>
<feature type="binding site" evidence="2">
    <location>
        <position position="112"/>
    </location>
    <ligand>
        <name>Zn(2+)</name>
        <dbReference type="ChEBI" id="CHEBI:29105"/>
        <note>catalytic</note>
    </ligand>
</feature>
<protein>
    <recommendedName>
        <fullName>Metalloendopeptidase OPG085</fullName>
        <ecNumber evidence="1">3.4.24.-</ecNumber>
    </recommendedName>
    <alternativeName>
        <fullName>Metalloendopeptidase G1</fullName>
    </alternativeName>
</protein>
<reference key="1">
    <citation type="journal article" date="1990" name="Virology">
        <title>The complete DNA sequence of vaccinia virus.</title>
        <authorList>
            <person name="Goebel S.J."/>
            <person name="Johnson G.P."/>
            <person name="Perkus M.E."/>
            <person name="Davis S.W."/>
            <person name="Winslow J.P."/>
            <person name="Paoletti E."/>
        </authorList>
    </citation>
    <scope>NUCLEOTIDE SEQUENCE [LARGE SCALE GENOMIC DNA]</scope>
</reference>
<reference key="2">
    <citation type="journal article" date="1990" name="Virology">
        <title>Appendix to 'The complete DNA sequence of vaccinia virus'.</title>
        <authorList>
            <person name="Goebel S.J."/>
            <person name="Johnson G.P."/>
            <person name="Perkus M.E."/>
            <person name="Davis S.W."/>
            <person name="Winslow J.P."/>
            <person name="Paoletti E."/>
        </authorList>
    </citation>
    <scope>NUCLEOTIDE SEQUENCE [LARGE SCALE GENOMIC DNA]</scope>
</reference>
<gene>
    <name type="primary">OPG085</name>
    <name type="ORF">G1L</name>
</gene>
<sequence>MIVLPNKVRIFINDRMKKDIYLGISNFGFENDIDEILGIAHLLEHLLISFDSTNFLANASTSRSYMSFWCKSINSATESDAIRTLVSWFFSNGKLKDNFSLSSIRFHIKELENEYYFRNEVFHCMDILTFLSGGDLYNGGRIDMIDNLNIVRDMLVNRMQRISGSNIVIFVKRLGPGTLDFFKQTFGSLPACPEIIPSSIPVSTNGKIVMTPSPFYTVMVKINPTLDNILGILYLYETYHLIDYETIGNQLYLTVSFIDETEYESFLRGEAILQISQCQSINMNYSDDYMMNIYLNFPWLSHDLYDYITRINDDSKSILISLTNEIYASIINRDIIVIYPNFSKAMCNTRDTQQHPIVVLDATNDGLIKKPYRSIPLMKRLTSNEIFIRYGDASLMDMITLSLSKQDISLKRNAEGIRVKHSFSADDIQAIMESDSFLKYSRSKPAAMYQYIFLSFFASGNSIDDILANRDSTLEFSKRTKSKILFGRNTRYDVTAKSSFVCGIVRGKSLDKTSLVEMMWDLKKKGLIYSMEFTNLLSKNTFYLFTFTIYTDEVYDYLNTNKLFSAKCLVVSTKGDVENFSSLKKDVVIRV</sequence>